<protein>
    <recommendedName>
        <fullName>Uncharacterized 42.1 kDa protein in intracellular alkaline protease 3'region</fullName>
    </recommendedName>
</protein>
<dbReference type="EMBL" id="D10730">
    <property type="protein sequence ID" value="BAA01574.1"/>
    <property type="molecule type" value="Genomic_DNA"/>
</dbReference>
<dbReference type="PIR" id="S27502">
    <property type="entry name" value="S27502"/>
</dbReference>
<dbReference type="InterPro" id="IPR032713">
    <property type="entry name" value="EmrE"/>
</dbReference>
<dbReference type="Pfam" id="PF13536">
    <property type="entry name" value="EmrE"/>
    <property type="match status" value="1"/>
</dbReference>
<proteinExistence type="predicted"/>
<accession>P29156</accession>
<feature type="chain" id="PRO_0000066271" description="Uncharacterized 42.1 kDa protein in intracellular alkaline protease 3'region">
    <location>
        <begin position="1"/>
        <end position="379"/>
    </location>
</feature>
<reference key="1">
    <citation type="submission" date="1992-03" db="EMBL/GenBank/DDBJ databases">
        <title>Cloning and nucleotide sequence of the intracellular alkaline protease gene of alkaliphilic Bacillus sp. strain 221.</title>
        <authorList>
            <person name="Kato C."/>
            <person name="Nakano Y."/>
            <person name="Yamamoto M."/>
            <person name="Horikoshi K."/>
        </authorList>
    </citation>
    <scope>NUCLEOTIDE SEQUENCE [GENOMIC DNA]</scope>
    <source>
        <strain>ATCC 21522 / DSM 2512 / JCM 9139 / LMG 18518 / 221</strain>
    </source>
</reference>
<name>YISP_SHOCL</name>
<organism>
    <name type="scientific">Shouchella clausii</name>
    <name type="common">Alkalihalobacillus clausii</name>
    <dbReference type="NCBI Taxonomy" id="79880"/>
    <lineage>
        <taxon>Bacteria</taxon>
        <taxon>Bacillati</taxon>
        <taxon>Bacillota</taxon>
        <taxon>Bacilli</taxon>
        <taxon>Bacillales</taxon>
        <taxon>Bacillaceae</taxon>
        <taxon>Shouchella</taxon>
    </lineage>
</organism>
<sequence>MFRGAVMKAMLLGILAAFFFSFTFLLNRMMEVEGGSWLFSASMRFLFMLPFLLVIVYIRTGFKALWLSVRKNPFPWFGWSFVGFVLFYAPLTFASGYAPGWLVAGTFQLTIVAGLLLSPLFYHVSADGSRIRQTIPLRSLFSSAVIFVGVVFIQAQHATSISGNLLFSVAPVIVAAFAYPLGNIKMMELTDGCIDTFSRVLGMTVMTTPVWVVLFAIGTIQHGLPTTSQTGQALIVAISSGIIATLLFFYATDRTRKKPNHLLPGRSTQSGEGRVRTHIGASLFASIVSFSTCASRHWTYCHWHGASQLPHTENSTAKFGKSEAKQEWLTLVLEKFWTRQIQAKNPNAVRTFPISLSDFGDSCKPHLAVFFAEMKSWDK</sequence>